<dbReference type="EC" id="2.4.2.9" evidence="1"/>
<dbReference type="EMBL" id="CP000270">
    <property type="protein sequence ID" value="ABE29724.1"/>
    <property type="molecule type" value="Genomic_DNA"/>
</dbReference>
<dbReference type="RefSeq" id="WP_011487457.1">
    <property type="nucleotide sequence ID" value="NZ_CP008760.1"/>
</dbReference>
<dbReference type="SMR" id="Q142L5"/>
<dbReference type="STRING" id="266265.Bxe_A3258"/>
<dbReference type="KEGG" id="bxb:DR64_960"/>
<dbReference type="KEGG" id="bxe:Bxe_A3258"/>
<dbReference type="PATRIC" id="fig|266265.5.peg.1222"/>
<dbReference type="eggNOG" id="COG0035">
    <property type="taxonomic scope" value="Bacteria"/>
</dbReference>
<dbReference type="OrthoDB" id="9781675at2"/>
<dbReference type="UniPathway" id="UPA00574">
    <property type="reaction ID" value="UER00636"/>
</dbReference>
<dbReference type="Proteomes" id="UP000001817">
    <property type="component" value="Chromosome 1"/>
</dbReference>
<dbReference type="GO" id="GO:0005525">
    <property type="term" value="F:GTP binding"/>
    <property type="evidence" value="ECO:0007669"/>
    <property type="project" value="UniProtKB-KW"/>
</dbReference>
<dbReference type="GO" id="GO:0000287">
    <property type="term" value="F:magnesium ion binding"/>
    <property type="evidence" value="ECO:0007669"/>
    <property type="project" value="UniProtKB-UniRule"/>
</dbReference>
<dbReference type="GO" id="GO:0004845">
    <property type="term" value="F:uracil phosphoribosyltransferase activity"/>
    <property type="evidence" value="ECO:0007669"/>
    <property type="project" value="UniProtKB-UniRule"/>
</dbReference>
<dbReference type="GO" id="GO:0044206">
    <property type="term" value="P:UMP salvage"/>
    <property type="evidence" value="ECO:0007669"/>
    <property type="project" value="UniProtKB-UniRule"/>
</dbReference>
<dbReference type="GO" id="GO:0006223">
    <property type="term" value="P:uracil salvage"/>
    <property type="evidence" value="ECO:0007669"/>
    <property type="project" value="InterPro"/>
</dbReference>
<dbReference type="CDD" id="cd06223">
    <property type="entry name" value="PRTases_typeI"/>
    <property type="match status" value="1"/>
</dbReference>
<dbReference type="FunFam" id="3.40.50.2020:FF:000003">
    <property type="entry name" value="Uracil phosphoribosyltransferase"/>
    <property type="match status" value="1"/>
</dbReference>
<dbReference type="Gene3D" id="3.40.50.2020">
    <property type="match status" value="1"/>
</dbReference>
<dbReference type="HAMAP" id="MF_01218_B">
    <property type="entry name" value="Upp_B"/>
    <property type="match status" value="1"/>
</dbReference>
<dbReference type="InterPro" id="IPR000836">
    <property type="entry name" value="PRibTrfase_dom"/>
</dbReference>
<dbReference type="InterPro" id="IPR029057">
    <property type="entry name" value="PRTase-like"/>
</dbReference>
<dbReference type="InterPro" id="IPR034332">
    <property type="entry name" value="Upp_B"/>
</dbReference>
<dbReference type="InterPro" id="IPR050054">
    <property type="entry name" value="UPRTase/APRTase"/>
</dbReference>
<dbReference type="InterPro" id="IPR005765">
    <property type="entry name" value="Ura_phspho_trans"/>
</dbReference>
<dbReference type="NCBIfam" id="NF001097">
    <property type="entry name" value="PRK00129.1"/>
    <property type="match status" value="1"/>
</dbReference>
<dbReference type="NCBIfam" id="TIGR01091">
    <property type="entry name" value="upp"/>
    <property type="match status" value="1"/>
</dbReference>
<dbReference type="PANTHER" id="PTHR32315">
    <property type="entry name" value="ADENINE PHOSPHORIBOSYLTRANSFERASE"/>
    <property type="match status" value="1"/>
</dbReference>
<dbReference type="PANTHER" id="PTHR32315:SF4">
    <property type="entry name" value="URACIL PHOSPHORIBOSYLTRANSFERASE, CHLOROPLASTIC"/>
    <property type="match status" value="1"/>
</dbReference>
<dbReference type="Pfam" id="PF14681">
    <property type="entry name" value="UPRTase"/>
    <property type="match status" value="1"/>
</dbReference>
<dbReference type="SUPFAM" id="SSF53271">
    <property type="entry name" value="PRTase-like"/>
    <property type="match status" value="1"/>
</dbReference>
<name>UPP_PARXL</name>
<reference key="1">
    <citation type="journal article" date="2006" name="Proc. Natl. Acad. Sci. U.S.A.">
        <title>Burkholderia xenovorans LB400 harbors a multi-replicon, 9.73-Mbp genome shaped for versatility.</title>
        <authorList>
            <person name="Chain P.S.G."/>
            <person name="Denef V.J."/>
            <person name="Konstantinidis K.T."/>
            <person name="Vergez L.M."/>
            <person name="Agullo L."/>
            <person name="Reyes V.L."/>
            <person name="Hauser L."/>
            <person name="Cordova M."/>
            <person name="Gomez L."/>
            <person name="Gonzalez M."/>
            <person name="Land M."/>
            <person name="Lao V."/>
            <person name="Larimer F."/>
            <person name="LiPuma J.J."/>
            <person name="Mahenthiralingam E."/>
            <person name="Malfatti S.A."/>
            <person name="Marx C.J."/>
            <person name="Parnell J.J."/>
            <person name="Ramette A."/>
            <person name="Richardson P."/>
            <person name="Seeger M."/>
            <person name="Smith D."/>
            <person name="Spilker T."/>
            <person name="Sul W.J."/>
            <person name="Tsoi T.V."/>
            <person name="Ulrich L.E."/>
            <person name="Zhulin I.B."/>
            <person name="Tiedje J.M."/>
        </authorList>
    </citation>
    <scope>NUCLEOTIDE SEQUENCE [LARGE SCALE GENOMIC DNA]</scope>
    <source>
        <strain>LB400</strain>
    </source>
</reference>
<evidence type="ECO:0000255" key="1">
    <source>
        <dbReference type="HAMAP-Rule" id="MF_01218"/>
    </source>
</evidence>
<comment type="function">
    <text evidence="1">Catalyzes the conversion of uracil and 5-phospho-alpha-D-ribose 1-diphosphate (PRPP) to UMP and diphosphate.</text>
</comment>
<comment type="catalytic activity">
    <reaction evidence="1">
        <text>UMP + diphosphate = 5-phospho-alpha-D-ribose 1-diphosphate + uracil</text>
        <dbReference type="Rhea" id="RHEA:13017"/>
        <dbReference type="ChEBI" id="CHEBI:17568"/>
        <dbReference type="ChEBI" id="CHEBI:33019"/>
        <dbReference type="ChEBI" id="CHEBI:57865"/>
        <dbReference type="ChEBI" id="CHEBI:58017"/>
        <dbReference type="EC" id="2.4.2.9"/>
    </reaction>
</comment>
<comment type="cofactor">
    <cofactor evidence="1">
        <name>Mg(2+)</name>
        <dbReference type="ChEBI" id="CHEBI:18420"/>
    </cofactor>
    <text evidence="1">Binds 1 Mg(2+) ion per subunit. The magnesium is bound as Mg-PRPP.</text>
</comment>
<comment type="activity regulation">
    <text evidence="1">Allosterically activated by GTP.</text>
</comment>
<comment type="pathway">
    <text evidence="1">Pyrimidine metabolism; UMP biosynthesis via salvage pathway; UMP from uracil: step 1/1.</text>
</comment>
<comment type="similarity">
    <text evidence="1">Belongs to the UPRTase family.</text>
</comment>
<feature type="chain" id="PRO_1000053693" description="Uracil phosphoribosyltransferase">
    <location>
        <begin position="1"/>
        <end position="216"/>
    </location>
</feature>
<feature type="binding site" evidence="1">
    <location>
        <position position="85"/>
    </location>
    <ligand>
        <name>5-phospho-alpha-D-ribose 1-diphosphate</name>
        <dbReference type="ChEBI" id="CHEBI:58017"/>
    </ligand>
</feature>
<feature type="binding site" evidence="1">
    <location>
        <position position="110"/>
    </location>
    <ligand>
        <name>5-phospho-alpha-D-ribose 1-diphosphate</name>
        <dbReference type="ChEBI" id="CHEBI:58017"/>
    </ligand>
</feature>
<feature type="binding site" evidence="1">
    <location>
        <begin position="135"/>
        <end position="143"/>
    </location>
    <ligand>
        <name>5-phospho-alpha-D-ribose 1-diphosphate</name>
        <dbReference type="ChEBI" id="CHEBI:58017"/>
    </ligand>
</feature>
<feature type="binding site" evidence="1">
    <location>
        <position position="200"/>
    </location>
    <ligand>
        <name>uracil</name>
        <dbReference type="ChEBI" id="CHEBI:17568"/>
    </ligand>
</feature>
<feature type="binding site" evidence="1">
    <location>
        <begin position="205"/>
        <end position="207"/>
    </location>
    <ligand>
        <name>uracil</name>
        <dbReference type="ChEBI" id="CHEBI:17568"/>
    </ligand>
</feature>
<feature type="binding site" evidence="1">
    <location>
        <position position="206"/>
    </location>
    <ligand>
        <name>5-phospho-alpha-D-ribose 1-diphosphate</name>
        <dbReference type="ChEBI" id="CHEBI:58017"/>
    </ligand>
</feature>
<proteinExistence type="inferred from homology"/>
<organism>
    <name type="scientific">Paraburkholderia xenovorans (strain LB400)</name>
    <dbReference type="NCBI Taxonomy" id="266265"/>
    <lineage>
        <taxon>Bacteria</taxon>
        <taxon>Pseudomonadati</taxon>
        <taxon>Pseudomonadota</taxon>
        <taxon>Betaproteobacteria</taxon>
        <taxon>Burkholderiales</taxon>
        <taxon>Burkholderiaceae</taxon>
        <taxon>Paraburkholderia</taxon>
    </lineage>
</organism>
<keyword id="KW-0021">Allosteric enzyme</keyword>
<keyword id="KW-0328">Glycosyltransferase</keyword>
<keyword id="KW-0342">GTP-binding</keyword>
<keyword id="KW-0460">Magnesium</keyword>
<keyword id="KW-0547">Nucleotide-binding</keyword>
<keyword id="KW-1185">Reference proteome</keyword>
<keyword id="KW-0808">Transferase</keyword>
<sequence>MTQDSRFPNLFILDHPLIQHKLSHMRDRDTSTRTFRELLREITLLMGYEITRNLPMTTRRLTTPLVEIDAPVIAGKKLAIVPVLRAGIGMSDGLLELVPSARVGHIGVYRAEDHRPVEYLVRLPDLEDRVFILCDPMVATGYSAVHAVDVLKRRNVAGENILFLALVAAPEGVQVFQDAHPDVKLYVASLDSHLNEHAYIVPGLGDAGDRLFGTKN</sequence>
<gene>
    <name evidence="1" type="primary">upp</name>
    <name type="ordered locus">Bxeno_A1186</name>
    <name type="ORF">Bxe_A3258</name>
</gene>
<accession>Q142L5</accession>
<protein>
    <recommendedName>
        <fullName evidence="1">Uracil phosphoribosyltransferase</fullName>
        <ecNumber evidence="1">2.4.2.9</ecNumber>
    </recommendedName>
    <alternativeName>
        <fullName evidence="1">UMP pyrophosphorylase</fullName>
    </alternativeName>
    <alternativeName>
        <fullName evidence="1">UPRTase</fullName>
    </alternativeName>
</protein>